<gene>
    <name evidence="1" type="primary">rpoC1</name>
    <name type="ordered locus">A9601_16881</name>
</gene>
<sequence length="634" mass="72501">MTNSNLRTENHFDYVKISIASPQRIMDWGQRTLPNGQVVGEVTKPETINYRTLKPEMDGLFCEKIFGPSKDWECHCGKYKRVRHRGIVCERCGVEVTESRVRRHRMGYIKLAAPVSHVWYLKGIPSYVAILLDIPLRDVEQIVYFNCYVVLDPGDHKELKYKQLLTEDEWLEIEDEIYAEDSTIENEPFVGIGAEALKQLLEDLDLHQIAEELREEITNSKGQKRAKLIKRIRVIDNFIATNAKPEWMVLDAIPVIPPDLRPMVQLDGGRFATSDLNDLYRRVINRNNRLARLQEILAPEIIVRNEKRMLQEAVDALIDNGRRGRTVVGANNRALKSLSDIIEGKQGRFRQNLLGKRVDYSGRSVIVVGPKLKMHQCGLPKEMAIELFQPFVIHRLIRQNIVNNIKAAKKLIQKADDEVMQVLQEVIEGHPILLNRAPTLHRLGIQAFEPKLVGGRAIQLHPLVCPAFNADFDGDQMAVHVPLALEAQTEARMLMLASNNILSPATGEPIVTPSQDMVLGSYYLTALQPNYQKPEFGDNKTTFASLEDVIFAFEDKRLSLHEWIWVRFNGEVEDEDEMLSPQKTKELEDGSRLEIWNLRRDRFGSDNNLISRFVLTTVGRVVMNYTIIDSVSKT</sequence>
<accession>A2BT60</accession>
<reference key="1">
    <citation type="journal article" date="2007" name="PLoS Genet.">
        <title>Patterns and implications of gene gain and loss in the evolution of Prochlorococcus.</title>
        <authorList>
            <person name="Kettler G.C."/>
            <person name="Martiny A.C."/>
            <person name="Huang K."/>
            <person name="Zucker J."/>
            <person name="Coleman M.L."/>
            <person name="Rodrigue S."/>
            <person name="Chen F."/>
            <person name="Lapidus A."/>
            <person name="Ferriera S."/>
            <person name="Johnson J."/>
            <person name="Steglich C."/>
            <person name="Church G.M."/>
            <person name="Richardson P."/>
            <person name="Chisholm S.W."/>
        </authorList>
    </citation>
    <scope>NUCLEOTIDE SEQUENCE [LARGE SCALE GENOMIC DNA]</scope>
    <source>
        <strain>AS9601</strain>
    </source>
</reference>
<proteinExistence type="inferred from homology"/>
<feature type="chain" id="PRO_1000051994" description="DNA-directed RNA polymerase subunit gamma">
    <location>
        <begin position="1"/>
        <end position="634"/>
    </location>
</feature>
<feature type="binding site" evidence="1">
    <location>
        <position position="74"/>
    </location>
    <ligand>
        <name>Zn(2+)</name>
        <dbReference type="ChEBI" id="CHEBI:29105"/>
    </ligand>
</feature>
<feature type="binding site" evidence="1">
    <location>
        <position position="76"/>
    </location>
    <ligand>
        <name>Zn(2+)</name>
        <dbReference type="ChEBI" id="CHEBI:29105"/>
    </ligand>
</feature>
<feature type="binding site" evidence="1">
    <location>
        <position position="89"/>
    </location>
    <ligand>
        <name>Zn(2+)</name>
        <dbReference type="ChEBI" id="CHEBI:29105"/>
    </ligand>
</feature>
<feature type="binding site" evidence="1">
    <location>
        <position position="92"/>
    </location>
    <ligand>
        <name>Zn(2+)</name>
        <dbReference type="ChEBI" id="CHEBI:29105"/>
    </ligand>
</feature>
<feature type="binding site" evidence="1">
    <location>
        <position position="471"/>
    </location>
    <ligand>
        <name>Mg(2+)</name>
        <dbReference type="ChEBI" id="CHEBI:18420"/>
    </ligand>
</feature>
<feature type="binding site" evidence="1">
    <location>
        <position position="473"/>
    </location>
    <ligand>
        <name>Mg(2+)</name>
        <dbReference type="ChEBI" id="CHEBI:18420"/>
    </ligand>
</feature>
<feature type="binding site" evidence="1">
    <location>
        <position position="475"/>
    </location>
    <ligand>
        <name>Mg(2+)</name>
        <dbReference type="ChEBI" id="CHEBI:18420"/>
    </ligand>
</feature>
<evidence type="ECO:0000255" key="1">
    <source>
        <dbReference type="HAMAP-Rule" id="MF_01323"/>
    </source>
</evidence>
<dbReference type="EC" id="2.7.7.6" evidence="1"/>
<dbReference type="EMBL" id="CP000551">
    <property type="protein sequence ID" value="ABM70971.1"/>
    <property type="molecule type" value="Genomic_DNA"/>
</dbReference>
<dbReference type="RefSeq" id="WP_011819099.1">
    <property type="nucleotide sequence ID" value="NC_008816.1"/>
</dbReference>
<dbReference type="SMR" id="A2BT60"/>
<dbReference type="STRING" id="146891.A9601_16881"/>
<dbReference type="KEGG" id="pmb:A9601_16881"/>
<dbReference type="eggNOG" id="COG0086">
    <property type="taxonomic scope" value="Bacteria"/>
</dbReference>
<dbReference type="HOGENOM" id="CLU_030022_2_0_3"/>
<dbReference type="OrthoDB" id="9815296at2"/>
<dbReference type="Proteomes" id="UP000002590">
    <property type="component" value="Chromosome"/>
</dbReference>
<dbReference type="GO" id="GO:0000428">
    <property type="term" value="C:DNA-directed RNA polymerase complex"/>
    <property type="evidence" value="ECO:0007669"/>
    <property type="project" value="UniProtKB-KW"/>
</dbReference>
<dbReference type="GO" id="GO:0003677">
    <property type="term" value="F:DNA binding"/>
    <property type="evidence" value="ECO:0007669"/>
    <property type="project" value="UniProtKB-UniRule"/>
</dbReference>
<dbReference type="GO" id="GO:0003899">
    <property type="term" value="F:DNA-directed RNA polymerase activity"/>
    <property type="evidence" value="ECO:0007669"/>
    <property type="project" value="UniProtKB-UniRule"/>
</dbReference>
<dbReference type="GO" id="GO:0000287">
    <property type="term" value="F:magnesium ion binding"/>
    <property type="evidence" value="ECO:0007669"/>
    <property type="project" value="UniProtKB-UniRule"/>
</dbReference>
<dbReference type="GO" id="GO:0008270">
    <property type="term" value="F:zinc ion binding"/>
    <property type="evidence" value="ECO:0007669"/>
    <property type="project" value="UniProtKB-UniRule"/>
</dbReference>
<dbReference type="GO" id="GO:0006351">
    <property type="term" value="P:DNA-templated transcription"/>
    <property type="evidence" value="ECO:0007669"/>
    <property type="project" value="UniProtKB-UniRule"/>
</dbReference>
<dbReference type="Gene3D" id="1.10.40.90">
    <property type="match status" value="1"/>
</dbReference>
<dbReference type="Gene3D" id="2.40.40.20">
    <property type="match status" value="1"/>
</dbReference>
<dbReference type="Gene3D" id="4.10.860.120">
    <property type="entry name" value="RNA polymerase II, clamp domain"/>
    <property type="match status" value="1"/>
</dbReference>
<dbReference type="Gene3D" id="1.10.274.100">
    <property type="entry name" value="RNA polymerase Rpb1, domain 3"/>
    <property type="match status" value="1"/>
</dbReference>
<dbReference type="HAMAP" id="MF_01323">
    <property type="entry name" value="RNApol_bact_RpoC1"/>
    <property type="match status" value="1"/>
</dbReference>
<dbReference type="InterPro" id="IPR012755">
    <property type="entry name" value="DNA-dir_RpoC1_gamma"/>
</dbReference>
<dbReference type="InterPro" id="IPR045867">
    <property type="entry name" value="DNA-dir_RpoC_beta_prime"/>
</dbReference>
<dbReference type="InterPro" id="IPR000722">
    <property type="entry name" value="RNA_pol_asu"/>
</dbReference>
<dbReference type="InterPro" id="IPR006592">
    <property type="entry name" value="RNA_pol_N"/>
</dbReference>
<dbReference type="InterPro" id="IPR007080">
    <property type="entry name" value="RNA_pol_Rpb1_1"/>
</dbReference>
<dbReference type="InterPro" id="IPR007066">
    <property type="entry name" value="RNA_pol_Rpb1_3"/>
</dbReference>
<dbReference type="InterPro" id="IPR042102">
    <property type="entry name" value="RNA_pol_Rpb1_3_sf"/>
</dbReference>
<dbReference type="InterPro" id="IPR044893">
    <property type="entry name" value="RNA_pol_Rpb1_clamp_domain"/>
</dbReference>
<dbReference type="InterPro" id="IPR034678">
    <property type="entry name" value="RNApol_RpoC1"/>
</dbReference>
<dbReference type="NCBIfam" id="NF002729">
    <property type="entry name" value="PRK02625.1"/>
    <property type="match status" value="1"/>
</dbReference>
<dbReference type="NCBIfam" id="TIGR02387">
    <property type="entry name" value="rpoC1_cyan"/>
    <property type="match status" value="1"/>
</dbReference>
<dbReference type="PANTHER" id="PTHR19376">
    <property type="entry name" value="DNA-DIRECTED RNA POLYMERASE"/>
    <property type="match status" value="1"/>
</dbReference>
<dbReference type="PANTHER" id="PTHR19376:SF54">
    <property type="entry name" value="DNA-DIRECTED RNA POLYMERASE SUBUNIT BETA"/>
    <property type="match status" value="1"/>
</dbReference>
<dbReference type="Pfam" id="PF04997">
    <property type="entry name" value="RNA_pol_Rpb1_1"/>
    <property type="match status" value="1"/>
</dbReference>
<dbReference type="Pfam" id="PF00623">
    <property type="entry name" value="RNA_pol_Rpb1_2"/>
    <property type="match status" value="1"/>
</dbReference>
<dbReference type="Pfam" id="PF04983">
    <property type="entry name" value="RNA_pol_Rpb1_3"/>
    <property type="match status" value="1"/>
</dbReference>
<dbReference type="SMART" id="SM00663">
    <property type="entry name" value="RPOLA_N"/>
    <property type="match status" value="1"/>
</dbReference>
<dbReference type="SUPFAM" id="SSF64484">
    <property type="entry name" value="beta and beta-prime subunits of DNA dependent RNA-polymerase"/>
    <property type="match status" value="1"/>
</dbReference>
<comment type="function">
    <text evidence="1">DNA-dependent RNA polymerase catalyzes the transcription of DNA into RNA using the four ribonucleoside triphosphates as substrates.</text>
</comment>
<comment type="catalytic activity">
    <reaction evidence="1">
        <text>RNA(n) + a ribonucleoside 5'-triphosphate = RNA(n+1) + diphosphate</text>
        <dbReference type="Rhea" id="RHEA:21248"/>
        <dbReference type="Rhea" id="RHEA-COMP:14527"/>
        <dbReference type="Rhea" id="RHEA-COMP:17342"/>
        <dbReference type="ChEBI" id="CHEBI:33019"/>
        <dbReference type="ChEBI" id="CHEBI:61557"/>
        <dbReference type="ChEBI" id="CHEBI:140395"/>
        <dbReference type="EC" id="2.7.7.6"/>
    </reaction>
</comment>
<comment type="cofactor">
    <cofactor evidence="1">
        <name>Mg(2+)</name>
        <dbReference type="ChEBI" id="CHEBI:18420"/>
    </cofactor>
    <text evidence="1">Binds 1 Mg(2+) ion per subunit.</text>
</comment>
<comment type="cofactor">
    <cofactor evidence="1">
        <name>Zn(2+)</name>
        <dbReference type="ChEBI" id="CHEBI:29105"/>
    </cofactor>
    <text evidence="1">Binds 1 Zn(2+) ion per subunit.</text>
</comment>
<comment type="subunit">
    <text evidence="1">In cyanobacteria the RNAP catalytic core is composed of 2 alpha, 1 beta, 1 beta', 1 gamma and 1 omega subunit. When a sigma factor is associated with the core the holoenzyme is formed, which can initiate transcription.</text>
</comment>
<comment type="similarity">
    <text evidence="1">Belongs to the RNA polymerase beta' chain family. RpoC1 subfamily.</text>
</comment>
<name>RPOC1_PROMS</name>
<keyword id="KW-0240">DNA-directed RNA polymerase</keyword>
<keyword id="KW-0460">Magnesium</keyword>
<keyword id="KW-0479">Metal-binding</keyword>
<keyword id="KW-0548">Nucleotidyltransferase</keyword>
<keyword id="KW-0804">Transcription</keyword>
<keyword id="KW-0808">Transferase</keyword>
<keyword id="KW-0862">Zinc</keyword>
<protein>
    <recommendedName>
        <fullName evidence="1">DNA-directed RNA polymerase subunit gamma</fullName>
        <shortName evidence="1">RNAP subunit gamma</shortName>
        <ecNumber evidence="1">2.7.7.6</ecNumber>
    </recommendedName>
    <alternativeName>
        <fullName evidence="1">RNA polymerase subunit gamma</fullName>
    </alternativeName>
    <alternativeName>
        <fullName evidence="1">Transcriptase subunit gamma</fullName>
    </alternativeName>
</protein>
<organism>
    <name type="scientific">Prochlorococcus marinus (strain AS9601)</name>
    <dbReference type="NCBI Taxonomy" id="146891"/>
    <lineage>
        <taxon>Bacteria</taxon>
        <taxon>Bacillati</taxon>
        <taxon>Cyanobacteriota</taxon>
        <taxon>Cyanophyceae</taxon>
        <taxon>Synechococcales</taxon>
        <taxon>Prochlorococcaceae</taxon>
        <taxon>Prochlorococcus</taxon>
    </lineage>
</organism>